<organism>
    <name type="scientific">Pseudomonas aeruginosa (strain LESB58)</name>
    <dbReference type="NCBI Taxonomy" id="557722"/>
    <lineage>
        <taxon>Bacteria</taxon>
        <taxon>Pseudomonadati</taxon>
        <taxon>Pseudomonadota</taxon>
        <taxon>Gammaproteobacteria</taxon>
        <taxon>Pseudomonadales</taxon>
        <taxon>Pseudomonadaceae</taxon>
        <taxon>Pseudomonas</taxon>
    </lineage>
</organism>
<proteinExistence type="inferred from homology"/>
<sequence>MAKKIQAYIKLQVKAGQANPSPPVGPALGQHGVNIMEFCKAFNAKTQGQEPGLPTPVIITVYSDRSFTFETKSTPAAVLLKKAAGITSGSARPNSQKVGTVTRAQLEEIAKTKQADLTAADLDAAVRTIAGSARSMGLNVEGV</sequence>
<keyword id="KW-0488">Methylation</keyword>
<keyword id="KW-0687">Ribonucleoprotein</keyword>
<keyword id="KW-0689">Ribosomal protein</keyword>
<keyword id="KW-0694">RNA-binding</keyword>
<keyword id="KW-0699">rRNA-binding</keyword>
<protein>
    <recommendedName>
        <fullName evidence="1">Large ribosomal subunit protein uL11</fullName>
    </recommendedName>
    <alternativeName>
        <fullName evidence="2">50S ribosomal protein L11</fullName>
    </alternativeName>
</protein>
<comment type="function">
    <text evidence="1">Forms part of the ribosomal stalk which helps the ribosome interact with GTP-bound translation factors.</text>
</comment>
<comment type="subunit">
    <text evidence="1">Part of the ribosomal stalk of the 50S ribosomal subunit. Interacts with L10 and the large rRNA to form the base of the stalk. L10 forms an elongated spine to which L12 dimers bind in a sequential fashion forming a multimeric L10(L12)X complex.</text>
</comment>
<comment type="PTM">
    <text evidence="1">One or more lysine residues are methylated.</text>
</comment>
<comment type="similarity">
    <text evidence="1">Belongs to the universal ribosomal protein uL11 family.</text>
</comment>
<name>RL11_PSEA8</name>
<evidence type="ECO:0000255" key="1">
    <source>
        <dbReference type="HAMAP-Rule" id="MF_00736"/>
    </source>
</evidence>
<evidence type="ECO:0000305" key="2"/>
<feature type="chain" id="PRO_1000195694" description="Large ribosomal subunit protein uL11">
    <location>
        <begin position="1"/>
        <end position="143"/>
    </location>
</feature>
<reference key="1">
    <citation type="journal article" date="2009" name="Genome Res.">
        <title>Newly introduced genomic prophage islands are critical determinants of in vivo competitiveness in the Liverpool epidemic strain of Pseudomonas aeruginosa.</title>
        <authorList>
            <person name="Winstanley C."/>
            <person name="Langille M.G.I."/>
            <person name="Fothergill J.L."/>
            <person name="Kukavica-Ibrulj I."/>
            <person name="Paradis-Bleau C."/>
            <person name="Sanschagrin F."/>
            <person name="Thomson N.R."/>
            <person name="Winsor G.L."/>
            <person name="Quail M.A."/>
            <person name="Lennard N."/>
            <person name="Bignell A."/>
            <person name="Clarke L."/>
            <person name="Seeger K."/>
            <person name="Saunders D."/>
            <person name="Harris D."/>
            <person name="Parkhill J."/>
            <person name="Hancock R.E.W."/>
            <person name="Brinkman F.S.L."/>
            <person name="Levesque R.C."/>
        </authorList>
    </citation>
    <scope>NUCLEOTIDE SEQUENCE [LARGE SCALE GENOMIC DNA]</scope>
    <source>
        <strain>LESB58</strain>
    </source>
</reference>
<accession>B7V633</accession>
<gene>
    <name evidence="1" type="primary">rplK</name>
    <name type="ordered locus">PLES_06541</name>
</gene>
<dbReference type="EMBL" id="FM209186">
    <property type="protein sequence ID" value="CAW25381.1"/>
    <property type="molecule type" value="Genomic_DNA"/>
</dbReference>
<dbReference type="RefSeq" id="WP_003093751.1">
    <property type="nucleotide sequence ID" value="NC_011770.1"/>
</dbReference>
<dbReference type="SMR" id="B7V633"/>
<dbReference type="GeneID" id="77219187"/>
<dbReference type="KEGG" id="pag:PLES_06541"/>
<dbReference type="HOGENOM" id="CLU_074237_2_0_6"/>
<dbReference type="GO" id="GO:0022625">
    <property type="term" value="C:cytosolic large ribosomal subunit"/>
    <property type="evidence" value="ECO:0007669"/>
    <property type="project" value="TreeGrafter"/>
</dbReference>
<dbReference type="GO" id="GO:0070180">
    <property type="term" value="F:large ribosomal subunit rRNA binding"/>
    <property type="evidence" value="ECO:0007669"/>
    <property type="project" value="UniProtKB-UniRule"/>
</dbReference>
<dbReference type="GO" id="GO:0003735">
    <property type="term" value="F:structural constituent of ribosome"/>
    <property type="evidence" value="ECO:0007669"/>
    <property type="project" value="InterPro"/>
</dbReference>
<dbReference type="GO" id="GO:0006412">
    <property type="term" value="P:translation"/>
    <property type="evidence" value="ECO:0007669"/>
    <property type="project" value="UniProtKB-UniRule"/>
</dbReference>
<dbReference type="CDD" id="cd00349">
    <property type="entry name" value="Ribosomal_L11"/>
    <property type="match status" value="1"/>
</dbReference>
<dbReference type="FunFam" id="1.10.10.250:FF:000001">
    <property type="entry name" value="50S ribosomal protein L11"/>
    <property type="match status" value="1"/>
</dbReference>
<dbReference type="FunFam" id="3.30.1550.10:FF:000001">
    <property type="entry name" value="50S ribosomal protein L11"/>
    <property type="match status" value="1"/>
</dbReference>
<dbReference type="Gene3D" id="1.10.10.250">
    <property type="entry name" value="Ribosomal protein L11, C-terminal domain"/>
    <property type="match status" value="1"/>
</dbReference>
<dbReference type="Gene3D" id="3.30.1550.10">
    <property type="entry name" value="Ribosomal protein L11/L12, N-terminal domain"/>
    <property type="match status" value="1"/>
</dbReference>
<dbReference type="HAMAP" id="MF_00736">
    <property type="entry name" value="Ribosomal_uL11"/>
    <property type="match status" value="1"/>
</dbReference>
<dbReference type="InterPro" id="IPR000911">
    <property type="entry name" value="Ribosomal_uL11"/>
</dbReference>
<dbReference type="InterPro" id="IPR006519">
    <property type="entry name" value="Ribosomal_uL11_bac-typ"/>
</dbReference>
<dbReference type="InterPro" id="IPR020783">
    <property type="entry name" value="Ribosomal_uL11_C"/>
</dbReference>
<dbReference type="InterPro" id="IPR036769">
    <property type="entry name" value="Ribosomal_uL11_C_sf"/>
</dbReference>
<dbReference type="InterPro" id="IPR020785">
    <property type="entry name" value="Ribosomal_uL11_CS"/>
</dbReference>
<dbReference type="InterPro" id="IPR020784">
    <property type="entry name" value="Ribosomal_uL11_N"/>
</dbReference>
<dbReference type="InterPro" id="IPR036796">
    <property type="entry name" value="Ribosomal_uL11_N_sf"/>
</dbReference>
<dbReference type="NCBIfam" id="TIGR01632">
    <property type="entry name" value="L11_bact"/>
    <property type="match status" value="1"/>
</dbReference>
<dbReference type="PANTHER" id="PTHR11661">
    <property type="entry name" value="60S RIBOSOMAL PROTEIN L12"/>
    <property type="match status" value="1"/>
</dbReference>
<dbReference type="PANTHER" id="PTHR11661:SF1">
    <property type="entry name" value="LARGE RIBOSOMAL SUBUNIT PROTEIN UL11M"/>
    <property type="match status" value="1"/>
</dbReference>
<dbReference type="Pfam" id="PF00298">
    <property type="entry name" value="Ribosomal_L11"/>
    <property type="match status" value="1"/>
</dbReference>
<dbReference type="Pfam" id="PF03946">
    <property type="entry name" value="Ribosomal_L11_N"/>
    <property type="match status" value="1"/>
</dbReference>
<dbReference type="SMART" id="SM00649">
    <property type="entry name" value="RL11"/>
    <property type="match status" value="1"/>
</dbReference>
<dbReference type="SUPFAM" id="SSF54747">
    <property type="entry name" value="Ribosomal L11/L12e N-terminal domain"/>
    <property type="match status" value="1"/>
</dbReference>
<dbReference type="SUPFAM" id="SSF46906">
    <property type="entry name" value="Ribosomal protein L11, C-terminal domain"/>
    <property type="match status" value="1"/>
</dbReference>
<dbReference type="PROSITE" id="PS00359">
    <property type="entry name" value="RIBOSOMAL_L11"/>
    <property type="match status" value="1"/>
</dbReference>